<evidence type="ECO:0000255" key="1">
    <source>
        <dbReference type="HAMAP-Rule" id="MF_00639"/>
    </source>
</evidence>
<accession>A0QF50</accession>
<comment type="function">
    <text evidence="1">Cell wall formation. Catalyzes the addition of glutamate to the nucleotide precursor UDP-N-acetylmuramoyl-L-alanine (UMA).</text>
</comment>
<comment type="catalytic activity">
    <reaction evidence="1">
        <text>UDP-N-acetyl-alpha-D-muramoyl-L-alanine + D-glutamate + ATP = UDP-N-acetyl-alpha-D-muramoyl-L-alanyl-D-glutamate + ADP + phosphate + H(+)</text>
        <dbReference type="Rhea" id="RHEA:16429"/>
        <dbReference type="ChEBI" id="CHEBI:15378"/>
        <dbReference type="ChEBI" id="CHEBI:29986"/>
        <dbReference type="ChEBI" id="CHEBI:30616"/>
        <dbReference type="ChEBI" id="CHEBI:43474"/>
        <dbReference type="ChEBI" id="CHEBI:83898"/>
        <dbReference type="ChEBI" id="CHEBI:83900"/>
        <dbReference type="ChEBI" id="CHEBI:456216"/>
        <dbReference type="EC" id="6.3.2.9"/>
    </reaction>
</comment>
<comment type="pathway">
    <text evidence="1">Cell wall biogenesis; peptidoglycan biosynthesis.</text>
</comment>
<comment type="subcellular location">
    <subcellularLocation>
        <location evidence="1">Cytoplasm</location>
    </subcellularLocation>
</comment>
<comment type="similarity">
    <text evidence="1">Belongs to the MurCDEF family.</text>
</comment>
<sequence length="489" mass="49751">MSAAEPALAPLSPGAPVLVAGGGITGRAVLAALRRFGAAPTLCDDDPATLRGYVDSGVDTVSTSAAAERISRYALVVTSPGFAPTAPLPLAAAAAGVPVWGDVELAWRLDAAGHYGPPRRWLVVTGTNGKTTTTSMLHAMLTAAGRRSLLCGNIGSPVLDVLDQPAELLAVELSSFQLHWAPSLRPEGGAVLNIAEDHLDWHGTLADYAAAKARVLDGRVAVVGLDDSRAAALLSTARAPVRVGFRLGEPAAGELGVRGGQLVDRAFADDLTLLPVDSIPVPGPVGVLDALAAAALARCVDVPASPIAEAIVSFRVGRHRAEVVAVADGITYVDDSKATNPHAAEASVLAYPRVVWIAGGLLKGASVDAVVARMASRLVGAVLIGRDRREVAEALSRHAPDVPVVHVVTGEDAGMDATPVVFGANVTKVKHLGGDLGAAVMSAAVAAARDLAKPGDTVLLAPAAASFDQFAGYADRGDAFAAAVRAAIR</sequence>
<reference key="1">
    <citation type="submission" date="2006-10" db="EMBL/GenBank/DDBJ databases">
        <authorList>
            <person name="Fleischmann R.D."/>
            <person name="Dodson R.J."/>
            <person name="Haft D.H."/>
            <person name="Merkel J.S."/>
            <person name="Nelson W.C."/>
            <person name="Fraser C.M."/>
        </authorList>
    </citation>
    <scope>NUCLEOTIDE SEQUENCE [LARGE SCALE GENOMIC DNA]</scope>
    <source>
        <strain>104</strain>
    </source>
</reference>
<name>MURD_MYCA1</name>
<dbReference type="EC" id="6.3.2.9" evidence="1"/>
<dbReference type="EMBL" id="CP000479">
    <property type="protein sequence ID" value="ABK65413.1"/>
    <property type="molecule type" value="Genomic_DNA"/>
</dbReference>
<dbReference type="RefSeq" id="WP_011724731.1">
    <property type="nucleotide sequence ID" value="NC_008595.1"/>
</dbReference>
<dbReference type="SMR" id="A0QF50"/>
<dbReference type="KEGG" id="mav:MAV_2334"/>
<dbReference type="HOGENOM" id="CLU_032540_0_0_11"/>
<dbReference type="UniPathway" id="UPA00219"/>
<dbReference type="Proteomes" id="UP000001574">
    <property type="component" value="Chromosome"/>
</dbReference>
<dbReference type="GO" id="GO:0005737">
    <property type="term" value="C:cytoplasm"/>
    <property type="evidence" value="ECO:0007669"/>
    <property type="project" value="UniProtKB-SubCell"/>
</dbReference>
<dbReference type="GO" id="GO:0005524">
    <property type="term" value="F:ATP binding"/>
    <property type="evidence" value="ECO:0007669"/>
    <property type="project" value="UniProtKB-UniRule"/>
</dbReference>
<dbReference type="GO" id="GO:0008764">
    <property type="term" value="F:UDP-N-acetylmuramoylalanine-D-glutamate ligase activity"/>
    <property type="evidence" value="ECO:0007669"/>
    <property type="project" value="UniProtKB-UniRule"/>
</dbReference>
<dbReference type="GO" id="GO:0051301">
    <property type="term" value="P:cell division"/>
    <property type="evidence" value="ECO:0007669"/>
    <property type="project" value="UniProtKB-KW"/>
</dbReference>
<dbReference type="GO" id="GO:0071555">
    <property type="term" value="P:cell wall organization"/>
    <property type="evidence" value="ECO:0007669"/>
    <property type="project" value="UniProtKB-KW"/>
</dbReference>
<dbReference type="GO" id="GO:0009252">
    <property type="term" value="P:peptidoglycan biosynthetic process"/>
    <property type="evidence" value="ECO:0007669"/>
    <property type="project" value="UniProtKB-UniRule"/>
</dbReference>
<dbReference type="GO" id="GO:0008360">
    <property type="term" value="P:regulation of cell shape"/>
    <property type="evidence" value="ECO:0007669"/>
    <property type="project" value="UniProtKB-KW"/>
</dbReference>
<dbReference type="Gene3D" id="3.90.190.20">
    <property type="entry name" value="Mur ligase, C-terminal domain"/>
    <property type="match status" value="1"/>
</dbReference>
<dbReference type="Gene3D" id="3.40.1190.10">
    <property type="entry name" value="Mur-like, catalytic domain"/>
    <property type="match status" value="1"/>
</dbReference>
<dbReference type="Gene3D" id="3.40.50.720">
    <property type="entry name" value="NAD(P)-binding Rossmann-like Domain"/>
    <property type="match status" value="1"/>
</dbReference>
<dbReference type="HAMAP" id="MF_00639">
    <property type="entry name" value="MurD"/>
    <property type="match status" value="1"/>
</dbReference>
<dbReference type="InterPro" id="IPR036565">
    <property type="entry name" value="Mur-like_cat_sf"/>
</dbReference>
<dbReference type="InterPro" id="IPR004101">
    <property type="entry name" value="Mur_ligase_C"/>
</dbReference>
<dbReference type="InterPro" id="IPR036615">
    <property type="entry name" value="Mur_ligase_C_dom_sf"/>
</dbReference>
<dbReference type="InterPro" id="IPR013221">
    <property type="entry name" value="Mur_ligase_cen"/>
</dbReference>
<dbReference type="InterPro" id="IPR005762">
    <property type="entry name" value="MurD"/>
</dbReference>
<dbReference type="NCBIfam" id="TIGR01087">
    <property type="entry name" value="murD"/>
    <property type="match status" value="1"/>
</dbReference>
<dbReference type="PANTHER" id="PTHR43692">
    <property type="entry name" value="UDP-N-ACETYLMURAMOYLALANINE--D-GLUTAMATE LIGASE"/>
    <property type="match status" value="1"/>
</dbReference>
<dbReference type="PANTHER" id="PTHR43692:SF1">
    <property type="entry name" value="UDP-N-ACETYLMURAMOYLALANINE--D-GLUTAMATE LIGASE"/>
    <property type="match status" value="1"/>
</dbReference>
<dbReference type="Pfam" id="PF02875">
    <property type="entry name" value="Mur_ligase_C"/>
    <property type="match status" value="1"/>
</dbReference>
<dbReference type="Pfam" id="PF08245">
    <property type="entry name" value="Mur_ligase_M"/>
    <property type="match status" value="1"/>
</dbReference>
<dbReference type="SUPFAM" id="SSF51984">
    <property type="entry name" value="MurCD N-terminal domain"/>
    <property type="match status" value="1"/>
</dbReference>
<dbReference type="SUPFAM" id="SSF53623">
    <property type="entry name" value="MurD-like peptide ligases, catalytic domain"/>
    <property type="match status" value="1"/>
</dbReference>
<dbReference type="SUPFAM" id="SSF53244">
    <property type="entry name" value="MurD-like peptide ligases, peptide-binding domain"/>
    <property type="match status" value="1"/>
</dbReference>
<protein>
    <recommendedName>
        <fullName evidence="1">UDP-N-acetylmuramoylalanine--D-glutamate ligase</fullName>
        <ecNumber evidence="1">6.3.2.9</ecNumber>
    </recommendedName>
    <alternativeName>
        <fullName evidence="1">D-glutamic acid-adding enzyme</fullName>
    </alternativeName>
    <alternativeName>
        <fullName evidence="1">UDP-N-acetylmuramoyl-L-alanyl-D-glutamate synthetase</fullName>
    </alternativeName>
</protein>
<feature type="chain" id="PRO_0000301437" description="UDP-N-acetylmuramoylalanine--D-glutamate ligase">
    <location>
        <begin position="1"/>
        <end position="489"/>
    </location>
</feature>
<feature type="binding site" evidence="1">
    <location>
        <begin position="126"/>
        <end position="132"/>
    </location>
    <ligand>
        <name>ATP</name>
        <dbReference type="ChEBI" id="CHEBI:30616"/>
    </ligand>
</feature>
<gene>
    <name evidence="1" type="primary">murD</name>
    <name type="ordered locus">MAV_2334</name>
</gene>
<keyword id="KW-0067">ATP-binding</keyword>
<keyword id="KW-0131">Cell cycle</keyword>
<keyword id="KW-0132">Cell division</keyword>
<keyword id="KW-0133">Cell shape</keyword>
<keyword id="KW-0961">Cell wall biogenesis/degradation</keyword>
<keyword id="KW-0963">Cytoplasm</keyword>
<keyword id="KW-0436">Ligase</keyword>
<keyword id="KW-0547">Nucleotide-binding</keyword>
<keyword id="KW-0573">Peptidoglycan synthesis</keyword>
<proteinExistence type="inferred from homology"/>
<organism>
    <name type="scientific">Mycobacterium avium (strain 104)</name>
    <dbReference type="NCBI Taxonomy" id="243243"/>
    <lineage>
        <taxon>Bacteria</taxon>
        <taxon>Bacillati</taxon>
        <taxon>Actinomycetota</taxon>
        <taxon>Actinomycetes</taxon>
        <taxon>Mycobacteriales</taxon>
        <taxon>Mycobacteriaceae</taxon>
        <taxon>Mycobacterium</taxon>
        <taxon>Mycobacterium avium complex (MAC)</taxon>
    </lineage>
</organism>